<accession>Q9KKP2</accession>
<reference key="1">
    <citation type="journal article" date="2000" name="Nature">
        <title>DNA sequence of both chromosomes of the cholera pathogen Vibrio cholerae.</title>
        <authorList>
            <person name="Heidelberg J.F."/>
            <person name="Eisen J.A."/>
            <person name="Nelson W.C."/>
            <person name="Clayton R.A."/>
            <person name="Gwinn M.L."/>
            <person name="Dodson R.J."/>
            <person name="Haft D.H."/>
            <person name="Hickey E.K."/>
            <person name="Peterson J.D."/>
            <person name="Umayam L.A."/>
            <person name="Gill S.R."/>
            <person name="Nelson K.E."/>
            <person name="Read T.D."/>
            <person name="Tettelin H."/>
            <person name="Richardson D.L."/>
            <person name="Ermolaeva M.D."/>
            <person name="Vamathevan J.J."/>
            <person name="Bass S."/>
            <person name="Qin H."/>
            <person name="Dragoi I."/>
            <person name="Sellers P."/>
            <person name="McDonald L.A."/>
            <person name="Utterback T.R."/>
            <person name="Fleischmann R.D."/>
            <person name="Nierman W.C."/>
            <person name="White O."/>
            <person name="Salzberg S.L."/>
            <person name="Smith H.O."/>
            <person name="Colwell R.R."/>
            <person name="Mekalanos J.J."/>
            <person name="Venter J.C."/>
            <person name="Fraser C.M."/>
        </authorList>
    </citation>
    <scope>NUCLEOTIDE SEQUENCE [LARGE SCALE GENOMIC DNA]</scope>
    <source>
        <strain>ATCC 39315 / El Tor Inaba N16961</strain>
    </source>
</reference>
<dbReference type="EC" id="4.1.99.12" evidence="1"/>
<dbReference type="EMBL" id="AE003853">
    <property type="protein sequence ID" value="AAF96954.1"/>
    <property type="molecule type" value="Genomic_DNA"/>
</dbReference>
<dbReference type="PIR" id="B82384">
    <property type="entry name" value="B82384"/>
</dbReference>
<dbReference type="RefSeq" id="NP_233442.1">
    <property type="nucleotide sequence ID" value="NC_002506.1"/>
</dbReference>
<dbReference type="RefSeq" id="WP_001076646.1">
    <property type="nucleotide sequence ID" value="NZ_LT906615.1"/>
</dbReference>
<dbReference type="PDB" id="4P6C">
    <property type="method" value="X-ray"/>
    <property type="resolution" value="1.86 A"/>
    <property type="chains" value="A/B=1-218"/>
</dbReference>
<dbReference type="PDB" id="4P6D">
    <property type="method" value="X-ray"/>
    <property type="resolution" value="1.59 A"/>
    <property type="chains" value="A/B=1-218"/>
</dbReference>
<dbReference type="PDB" id="4P6P">
    <property type="method" value="X-ray"/>
    <property type="resolution" value="1.86 A"/>
    <property type="chains" value="A/B=1-218"/>
</dbReference>
<dbReference type="PDB" id="4P77">
    <property type="method" value="X-ray"/>
    <property type="resolution" value="2.04 A"/>
    <property type="chains" value="A/B=1-218"/>
</dbReference>
<dbReference type="PDB" id="4P8E">
    <property type="method" value="X-ray"/>
    <property type="resolution" value="2.04 A"/>
    <property type="chains" value="A/B=1-218"/>
</dbReference>
<dbReference type="PDB" id="4P8J">
    <property type="method" value="X-ray"/>
    <property type="resolution" value="1.96 A"/>
    <property type="chains" value="A/B=1-218"/>
</dbReference>
<dbReference type="PDB" id="7UEZ">
    <property type="method" value="X-ray"/>
    <property type="resolution" value="1.08 A"/>
    <property type="chains" value="A/B=1-218"/>
</dbReference>
<dbReference type="PDB" id="7UF0">
    <property type="method" value="X-ray"/>
    <property type="resolution" value="1.80 A"/>
    <property type="chains" value="A=1-218"/>
</dbReference>
<dbReference type="PDB" id="7UF1">
    <property type="method" value="X-ray"/>
    <property type="resolution" value="1.95 A"/>
    <property type="chains" value="A=1-218"/>
</dbReference>
<dbReference type="PDB" id="7UF2">
    <property type="method" value="X-ray"/>
    <property type="resolution" value="2.00 A"/>
    <property type="chains" value="A=1-218"/>
</dbReference>
<dbReference type="PDB" id="7UF3">
    <property type="method" value="X-ray"/>
    <property type="resolution" value="2.00 A"/>
    <property type="chains" value="A=1-218"/>
</dbReference>
<dbReference type="PDB" id="7UF4">
    <property type="method" value="X-ray"/>
    <property type="resolution" value="2.20 A"/>
    <property type="chains" value="A=1-218"/>
</dbReference>
<dbReference type="PDB" id="7UF5">
    <property type="method" value="X-ray"/>
    <property type="resolution" value="2.10 A"/>
    <property type="chains" value="A=1-218"/>
</dbReference>
<dbReference type="PDBsum" id="4P6C"/>
<dbReference type="PDBsum" id="4P6D"/>
<dbReference type="PDBsum" id="4P6P"/>
<dbReference type="PDBsum" id="4P77"/>
<dbReference type="PDBsum" id="4P8E"/>
<dbReference type="PDBsum" id="4P8J"/>
<dbReference type="PDBsum" id="7UEZ"/>
<dbReference type="PDBsum" id="7UF0"/>
<dbReference type="PDBsum" id="7UF1"/>
<dbReference type="PDBsum" id="7UF2"/>
<dbReference type="PDBsum" id="7UF3"/>
<dbReference type="PDBsum" id="7UF4"/>
<dbReference type="PDBsum" id="7UF5"/>
<dbReference type="SMR" id="Q9KKP2"/>
<dbReference type="STRING" id="243277.VC_A1060"/>
<dbReference type="DNASU" id="2612048"/>
<dbReference type="EnsemblBacteria" id="AAF96954">
    <property type="protein sequence ID" value="AAF96954"/>
    <property type="gene ID" value="VC_A1060"/>
</dbReference>
<dbReference type="GeneID" id="89512076"/>
<dbReference type="KEGG" id="vch:VC_A1060"/>
<dbReference type="PATRIC" id="fig|243277.26.peg.3666"/>
<dbReference type="eggNOG" id="COG0108">
    <property type="taxonomic scope" value="Bacteria"/>
</dbReference>
<dbReference type="HOGENOM" id="CLU_020273_3_0_6"/>
<dbReference type="BRENDA" id="4.1.99.12">
    <property type="organism ID" value="15862"/>
</dbReference>
<dbReference type="UniPathway" id="UPA00275">
    <property type="reaction ID" value="UER00399"/>
</dbReference>
<dbReference type="EvolutionaryTrace" id="Q9KKP2"/>
<dbReference type="Proteomes" id="UP000000584">
    <property type="component" value="Chromosome 2"/>
</dbReference>
<dbReference type="GO" id="GO:0005829">
    <property type="term" value="C:cytosol"/>
    <property type="evidence" value="ECO:0000318"/>
    <property type="project" value="GO_Central"/>
</dbReference>
<dbReference type="GO" id="GO:0008686">
    <property type="term" value="F:3,4-dihydroxy-2-butanone-4-phosphate synthase activity"/>
    <property type="evidence" value="ECO:0000318"/>
    <property type="project" value="GO_Central"/>
</dbReference>
<dbReference type="GO" id="GO:0000287">
    <property type="term" value="F:magnesium ion binding"/>
    <property type="evidence" value="ECO:0007669"/>
    <property type="project" value="UniProtKB-UniRule"/>
</dbReference>
<dbReference type="GO" id="GO:0030145">
    <property type="term" value="F:manganese ion binding"/>
    <property type="evidence" value="ECO:0007669"/>
    <property type="project" value="UniProtKB-UniRule"/>
</dbReference>
<dbReference type="GO" id="GO:0009231">
    <property type="term" value="P:riboflavin biosynthetic process"/>
    <property type="evidence" value="ECO:0000318"/>
    <property type="project" value="GO_Central"/>
</dbReference>
<dbReference type="FunFam" id="3.90.870.10:FF:000002">
    <property type="entry name" value="3,4-dihydroxy-2-butanone 4-phosphate synthase"/>
    <property type="match status" value="1"/>
</dbReference>
<dbReference type="Gene3D" id="3.90.870.10">
    <property type="entry name" value="DHBP synthase"/>
    <property type="match status" value="1"/>
</dbReference>
<dbReference type="HAMAP" id="MF_00180">
    <property type="entry name" value="RibB"/>
    <property type="match status" value="1"/>
</dbReference>
<dbReference type="InterPro" id="IPR017945">
    <property type="entry name" value="DHBP_synth_RibB-like_a/b_dom"/>
</dbReference>
<dbReference type="InterPro" id="IPR000422">
    <property type="entry name" value="DHBP_synthase_RibB"/>
</dbReference>
<dbReference type="NCBIfam" id="TIGR00506">
    <property type="entry name" value="ribB"/>
    <property type="match status" value="1"/>
</dbReference>
<dbReference type="PANTHER" id="PTHR21327:SF38">
    <property type="entry name" value="3,4-DIHYDROXY-2-BUTANONE 4-PHOSPHATE SYNTHASE"/>
    <property type="match status" value="1"/>
</dbReference>
<dbReference type="PANTHER" id="PTHR21327">
    <property type="entry name" value="GTP CYCLOHYDROLASE II-RELATED"/>
    <property type="match status" value="1"/>
</dbReference>
<dbReference type="Pfam" id="PF00926">
    <property type="entry name" value="DHBP_synthase"/>
    <property type="match status" value="1"/>
</dbReference>
<dbReference type="SUPFAM" id="SSF55821">
    <property type="entry name" value="YrdC/RibB"/>
    <property type="match status" value="1"/>
</dbReference>
<feature type="chain" id="PRO_0000151813" description="3,4-dihydroxy-2-butanone 4-phosphate synthase">
    <location>
        <begin position="1"/>
        <end position="218"/>
    </location>
</feature>
<feature type="binding site" evidence="1">
    <location>
        <begin position="38"/>
        <end position="39"/>
    </location>
    <ligand>
        <name>D-ribulose 5-phosphate</name>
        <dbReference type="ChEBI" id="CHEBI:58121"/>
    </ligand>
</feature>
<feature type="binding site" evidence="1">
    <location>
        <position position="39"/>
    </location>
    <ligand>
        <name>Mg(2+)</name>
        <dbReference type="ChEBI" id="CHEBI:18420"/>
        <label>1</label>
    </ligand>
</feature>
<feature type="binding site" evidence="1">
    <location>
        <position position="39"/>
    </location>
    <ligand>
        <name>Mg(2+)</name>
        <dbReference type="ChEBI" id="CHEBI:18420"/>
        <label>2</label>
    </ligand>
</feature>
<feature type="binding site" evidence="1">
    <location>
        <position position="43"/>
    </location>
    <ligand>
        <name>D-ribulose 5-phosphate</name>
        <dbReference type="ChEBI" id="CHEBI:58121"/>
    </ligand>
</feature>
<feature type="binding site" evidence="1">
    <location>
        <begin position="151"/>
        <end position="155"/>
    </location>
    <ligand>
        <name>D-ribulose 5-phosphate</name>
        <dbReference type="ChEBI" id="CHEBI:58121"/>
    </ligand>
</feature>
<feature type="binding site" evidence="1">
    <location>
        <position position="154"/>
    </location>
    <ligand>
        <name>Mg(2+)</name>
        <dbReference type="ChEBI" id="CHEBI:18420"/>
        <label>2</label>
    </ligand>
</feature>
<feature type="binding site" evidence="1">
    <location>
        <position position="175"/>
    </location>
    <ligand>
        <name>D-ribulose 5-phosphate</name>
        <dbReference type="ChEBI" id="CHEBI:58121"/>
    </ligand>
</feature>
<feature type="site" description="Essential for catalytic activity" evidence="1">
    <location>
        <position position="137"/>
    </location>
</feature>
<feature type="site" description="Essential for catalytic activity" evidence="1">
    <location>
        <position position="175"/>
    </location>
</feature>
<feature type="helix" evidence="5">
    <location>
        <begin position="3"/>
        <end position="7"/>
    </location>
</feature>
<feature type="helix" evidence="4">
    <location>
        <begin position="8"/>
        <end position="10"/>
    </location>
</feature>
<feature type="helix" evidence="4">
    <location>
        <begin position="13"/>
        <end position="25"/>
    </location>
</feature>
<feature type="strand" evidence="4">
    <location>
        <begin position="30"/>
        <end position="36"/>
    </location>
</feature>
<feature type="strand" evidence="4">
    <location>
        <begin position="43"/>
        <end position="48"/>
    </location>
</feature>
<feature type="helix" evidence="4">
    <location>
        <begin position="53"/>
        <end position="62"/>
    </location>
</feature>
<feature type="strand" evidence="4">
    <location>
        <begin position="68"/>
        <end position="71"/>
    </location>
</feature>
<feature type="helix" evidence="4">
    <location>
        <begin position="73"/>
        <end position="78"/>
    </location>
</feature>
<feature type="strand" evidence="3">
    <location>
        <begin position="83"/>
        <end position="87"/>
    </location>
</feature>
<feature type="strand" evidence="6">
    <location>
        <begin position="90"/>
        <end position="92"/>
    </location>
</feature>
<feature type="strand" evidence="4">
    <location>
        <begin position="100"/>
        <end position="105"/>
    </location>
</feature>
<feature type="strand" evidence="4">
    <location>
        <begin position="107"/>
        <end position="109"/>
    </location>
</feature>
<feature type="helix" evidence="4">
    <location>
        <begin position="112"/>
        <end position="123"/>
    </location>
</feature>
<feature type="helix" evidence="4">
    <location>
        <begin position="129"/>
        <end position="131"/>
    </location>
</feature>
<feature type="strand" evidence="4">
    <location>
        <begin position="132"/>
        <end position="142"/>
    </location>
</feature>
<feature type="helix" evidence="4">
    <location>
        <begin position="147"/>
        <end position="149"/>
    </location>
</feature>
<feature type="helix" evidence="4">
    <location>
        <begin position="154"/>
        <end position="165"/>
    </location>
</feature>
<feature type="strand" evidence="4">
    <location>
        <begin position="171"/>
        <end position="177"/>
    </location>
</feature>
<feature type="strand" evidence="2">
    <location>
        <begin position="181"/>
        <end position="183"/>
    </location>
</feature>
<feature type="helix" evidence="4">
    <location>
        <begin position="186"/>
        <end position="196"/>
    </location>
</feature>
<feature type="strand" evidence="4">
    <location>
        <begin position="200"/>
        <end position="202"/>
    </location>
</feature>
<feature type="helix" evidence="4">
    <location>
        <begin position="203"/>
        <end position="213"/>
    </location>
</feature>
<proteinExistence type="evidence at protein level"/>
<evidence type="ECO:0000255" key="1">
    <source>
        <dbReference type="HAMAP-Rule" id="MF_00180"/>
    </source>
</evidence>
<evidence type="ECO:0007829" key="2">
    <source>
        <dbReference type="PDB" id="4P6D"/>
    </source>
</evidence>
<evidence type="ECO:0007829" key="3">
    <source>
        <dbReference type="PDB" id="4P6P"/>
    </source>
</evidence>
<evidence type="ECO:0007829" key="4">
    <source>
        <dbReference type="PDB" id="7UEZ"/>
    </source>
</evidence>
<evidence type="ECO:0007829" key="5">
    <source>
        <dbReference type="PDB" id="7UF0"/>
    </source>
</evidence>
<evidence type="ECO:0007829" key="6">
    <source>
        <dbReference type="PDB" id="7UF4"/>
    </source>
</evidence>
<keyword id="KW-0002">3D-structure</keyword>
<keyword id="KW-0456">Lyase</keyword>
<keyword id="KW-0460">Magnesium</keyword>
<keyword id="KW-0464">Manganese</keyword>
<keyword id="KW-0479">Metal-binding</keyword>
<keyword id="KW-1185">Reference proteome</keyword>
<keyword id="KW-0686">Riboflavin biosynthesis</keyword>
<gene>
    <name evidence="1" type="primary">ribB</name>
    <name type="ordered locus">VC_A1060</name>
</gene>
<comment type="function">
    <text evidence="1">Catalyzes the conversion of D-ribulose 5-phosphate to formate and 3,4-dihydroxy-2-butanone 4-phosphate.</text>
</comment>
<comment type="catalytic activity">
    <reaction evidence="1">
        <text>D-ribulose 5-phosphate = (2S)-2-hydroxy-3-oxobutyl phosphate + formate + H(+)</text>
        <dbReference type="Rhea" id="RHEA:18457"/>
        <dbReference type="ChEBI" id="CHEBI:15378"/>
        <dbReference type="ChEBI" id="CHEBI:15740"/>
        <dbReference type="ChEBI" id="CHEBI:58121"/>
        <dbReference type="ChEBI" id="CHEBI:58830"/>
        <dbReference type="EC" id="4.1.99.12"/>
    </reaction>
</comment>
<comment type="cofactor">
    <cofactor evidence="1">
        <name>Mg(2+)</name>
        <dbReference type="ChEBI" id="CHEBI:18420"/>
    </cofactor>
    <cofactor evidence="1">
        <name>Mn(2+)</name>
        <dbReference type="ChEBI" id="CHEBI:29035"/>
    </cofactor>
    <text evidence="1">Binds 2 divalent metal cations per subunit. Magnesium or manganese.</text>
</comment>
<comment type="pathway">
    <text evidence="1">Cofactor biosynthesis; riboflavin biosynthesis; 2-hydroxy-3-oxobutyl phosphate from D-ribulose 5-phosphate: step 1/1.</text>
</comment>
<comment type="subunit">
    <text evidence="1">Homodimer.</text>
</comment>
<comment type="similarity">
    <text evidence="1">Belongs to the DHBP synthase family.</text>
</comment>
<protein>
    <recommendedName>
        <fullName evidence="1">3,4-dihydroxy-2-butanone 4-phosphate synthase</fullName>
        <shortName evidence="1">DHBP synthase</shortName>
        <ecNumber evidence="1">4.1.99.12</ecNumber>
    </recommendedName>
</protein>
<name>RIBB_VIBCH</name>
<organism>
    <name type="scientific">Vibrio cholerae serotype O1 (strain ATCC 39315 / El Tor Inaba N16961)</name>
    <dbReference type="NCBI Taxonomy" id="243277"/>
    <lineage>
        <taxon>Bacteria</taxon>
        <taxon>Pseudomonadati</taxon>
        <taxon>Pseudomonadota</taxon>
        <taxon>Gammaproteobacteria</taxon>
        <taxon>Vibrionales</taxon>
        <taxon>Vibrionaceae</taxon>
        <taxon>Vibrio</taxon>
    </lineage>
</organism>
<sequence>MNQSSLLAEFGDPITRVENALQALREGRGVLLLDDEDRENEGDIIYAVESLTTAQMALMIRECSGIVCLCLTEAQADRLALPPMVVNNNSANQTAFTVSIEAKHGVTTGVSAQDRVTTIKTAANPQAKPEDLARPGHVFPLRARAGGVLARRGHTEGTVDLMQMAGLQPAGVLCELTNPDGSMAKTPEIIEFGKLHNMPVLTIEDMVQYRIQFDLKLA</sequence>